<gene>
    <name evidence="1" type="primary">PRT1</name>
    <name type="ORF">LELG_05027</name>
</gene>
<dbReference type="EMBL" id="CH981531">
    <property type="protein sequence ID" value="EDK46846.1"/>
    <property type="molecule type" value="Genomic_DNA"/>
</dbReference>
<dbReference type="RefSeq" id="XP_001523611.1">
    <property type="nucleotide sequence ID" value="XM_001523561.1"/>
</dbReference>
<dbReference type="SMR" id="A5E5Y8"/>
<dbReference type="FunCoup" id="A5E5Y8">
    <property type="interactions" value="1314"/>
</dbReference>
<dbReference type="STRING" id="379508.A5E5Y8"/>
<dbReference type="GeneID" id="5230805"/>
<dbReference type="KEGG" id="lel:PVL30_005163"/>
<dbReference type="VEuPathDB" id="FungiDB:LELG_05027"/>
<dbReference type="eggNOG" id="KOG2314">
    <property type="taxonomic scope" value="Eukaryota"/>
</dbReference>
<dbReference type="HOGENOM" id="CLU_011152_4_0_1"/>
<dbReference type="InParanoid" id="A5E5Y8"/>
<dbReference type="OMA" id="LWGGPQF"/>
<dbReference type="OrthoDB" id="10250414at2759"/>
<dbReference type="Proteomes" id="UP000001996">
    <property type="component" value="Unassembled WGS sequence"/>
</dbReference>
<dbReference type="GO" id="GO:0010494">
    <property type="term" value="C:cytoplasmic stress granule"/>
    <property type="evidence" value="ECO:0007669"/>
    <property type="project" value="EnsemblFungi"/>
</dbReference>
<dbReference type="GO" id="GO:0016282">
    <property type="term" value="C:eukaryotic 43S preinitiation complex"/>
    <property type="evidence" value="ECO:0007669"/>
    <property type="project" value="UniProtKB-UniRule"/>
</dbReference>
<dbReference type="GO" id="GO:0033290">
    <property type="term" value="C:eukaryotic 48S preinitiation complex"/>
    <property type="evidence" value="ECO:0007669"/>
    <property type="project" value="UniProtKB-UniRule"/>
</dbReference>
<dbReference type="GO" id="GO:0071540">
    <property type="term" value="C:eukaryotic translation initiation factor 3 complex, eIF3e"/>
    <property type="evidence" value="ECO:0007669"/>
    <property type="project" value="EnsemblFungi"/>
</dbReference>
<dbReference type="GO" id="GO:0071541">
    <property type="term" value="C:eukaryotic translation initiation factor 3 complex, eIF3m"/>
    <property type="evidence" value="ECO:0007669"/>
    <property type="project" value="EnsemblFungi"/>
</dbReference>
<dbReference type="GO" id="GO:0043614">
    <property type="term" value="C:multi-eIF complex"/>
    <property type="evidence" value="ECO:0007669"/>
    <property type="project" value="EnsemblFungi"/>
</dbReference>
<dbReference type="GO" id="GO:0042802">
    <property type="term" value="F:identical protein binding"/>
    <property type="evidence" value="ECO:0007669"/>
    <property type="project" value="EnsemblFungi"/>
</dbReference>
<dbReference type="GO" id="GO:0003723">
    <property type="term" value="F:RNA binding"/>
    <property type="evidence" value="ECO:0007669"/>
    <property type="project" value="UniProtKB-UniRule"/>
</dbReference>
<dbReference type="GO" id="GO:0003743">
    <property type="term" value="F:translation initiation factor activity"/>
    <property type="evidence" value="ECO:0007669"/>
    <property type="project" value="UniProtKB-UniRule"/>
</dbReference>
<dbReference type="GO" id="GO:0031369">
    <property type="term" value="F:translation initiation factor binding"/>
    <property type="evidence" value="ECO:0007669"/>
    <property type="project" value="InterPro"/>
</dbReference>
<dbReference type="GO" id="GO:0001732">
    <property type="term" value="P:formation of cytoplasmic translation initiation complex"/>
    <property type="evidence" value="ECO:0007669"/>
    <property type="project" value="UniProtKB-UniRule"/>
</dbReference>
<dbReference type="CDD" id="cd12278">
    <property type="entry name" value="RRM_eIF3B"/>
    <property type="match status" value="1"/>
</dbReference>
<dbReference type="Gene3D" id="3.30.70.330">
    <property type="match status" value="1"/>
</dbReference>
<dbReference type="Gene3D" id="2.130.10.10">
    <property type="entry name" value="YVTN repeat-like/Quinoprotein amine dehydrogenase"/>
    <property type="match status" value="2"/>
</dbReference>
<dbReference type="HAMAP" id="MF_03001">
    <property type="entry name" value="eIF3b"/>
    <property type="match status" value="1"/>
</dbReference>
<dbReference type="InterPro" id="IPR011400">
    <property type="entry name" value="EIF3B"/>
</dbReference>
<dbReference type="InterPro" id="IPR034363">
    <property type="entry name" value="eIF3B_RRM"/>
</dbReference>
<dbReference type="InterPro" id="IPR012677">
    <property type="entry name" value="Nucleotide-bd_a/b_plait_sf"/>
</dbReference>
<dbReference type="InterPro" id="IPR035979">
    <property type="entry name" value="RBD_domain_sf"/>
</dbReference>
<dbReference type="InterPro" id="IPR000504">
    <property type="entry name" value="RRM_dom"/>
</dbReference>
<dbReference type="InterPro" id="IPR013979">
    <property type="entry name" value="TIF_beta_prop-like"/>
</dbReference>
<dbReference type="InterPro" id="IPR015943">
    <property type="entry name" value="WD40/YVTN_repeat-like_dom_sf"/>
</dbReference>
<dbReference type="PANTHER" id="PTHR14068">
    <property type="entry name" value="EUKARYOTIC TRANSLATION INITIATION FACTOR 3 EIF3 -RELATED"/>
    <property type="match status" value="1"/>
</dbReference>
<dbReference type="PANTHER" id="PTHR14068:SF0">
    <property type="entry name" value="EUKARYOTIC TRANSLATION INITIATION FACTOR 3 SUBUNIT B"/>
    <property type="match status" value="1"/>
</dbReference>
<dbReference type="Pfam" id="PF08662">
    <property type="entry name" value="eIF2A"/>
    <property type="match status" value="1"/>
</dbReference>
<dbReference type="Pfam" id="PF00076">
    <property type="entry name" value="RRM_1"/>
    <property type="match status" value="1"/>
</dbReference>
<dbReference type="PIRSF" id="PIRSF036424">
    <property type="entry name" value="eIF3b"/>
    <property type="match status" value="1"/>
</dbReference>
<dbReference type="SMART" id="SM00360">
    <property type="entry name" value="RRM"/>
    <property type="match status" value="1"/>
</dbReference>
<dbReference type="SUPFAM" id="SSF82171">
    <property type="entry name" value="DPP6 N-terminal domain-like"/>
    <property type="match status" value="1"/>
</dbReference>
<dbReference type="SUPFAM" id="SSF54928">
    <property type="entry name" value="RNA-binding domain, RBD"/>
    <property type="match status" value="1"/>
</dbReference>
<dbReference type="PROSITE" id="PS50102">
    <property type="entry name" value="RRM"/>
    <property type="match status" value="1"/>
</dbReference>
<sequence>MSINEEEYLRLEEEIDLGDIDFTDLEEQYEADLGYDNYVIVDGAPIAPEAKVPILIKVLRKLFSTAGEIVEGDEGIFMPMENGKSKGFLFIQYKNVADADTAIKKLNGKKLDAQHRLLVNRLSDIEKYGSVSGEFKEPEIEPFQSHGFLQSWLQDEQGKDQIVLHFNESVGVYWNKKTSEPEPVIEPRRGFTSKYAKFSPKGTYLFSIHPQGIQAWGGADFHRIKRFFHNQVRLVDFSPNEKYMVTLSPLPITLPDSTAERAQFPFGPESEGHKLVIWDMETGEPARTFALPPHLENQKEMQWPLVKWSFDDKYCARQGPDALAIYETPSFQLLEKKLVKIDGIQEFEWAPAGVKLHNSKEANEHLLSYWTPESANQTARVAIMQIPSRQVLRTVNLFQVSDCKMHWQSEGKLLCVKVDRHTKSGKTLFSNLDFFKVTERDIPVEKLELKDVIVNFSWEPKSERFVTISRLDDGNPNPAIPKNSITFYAVEEGKGKNANSKYKAYKQIENKHSNTVFWSPKGRYVAVATISRSSGEIEFYDVSFDDETSKKAAPANVKLLKTDKYSGMTNIAWDPSGRFLAAWSSSWLHTIENGYRIYEFTGNLLRDDSVDQFKEFIWRPRPESLLTSSDRKKVRSNLREYSAQFEEFDAMEADAAVREAILARRKALEDWRAYRAKHAGKKVQTSKVQAEVIEEIKEEIVEEKEEIVE</sequence>
<reference key="1">
    <citation type="journal article" date="2009" name="Nature">
        <title>Evolution of pathogenicity and sexual reproduction in eight Candida genomes.</title>
        <authorList>
            <person name="Butler G."/>
            <person name="Rasmussen M.D."/>
            <person name="Lin M.F."/>
            <person name="Santos M.A.S."/>
            <person name="Sakthikumar S."/>
            <person name="Munro C.A."/>
            <person name="Rheinbay E."/>
            <person name="Grabherr M."/>
            <person name="Forche A."/>
            <person name="Reedy J.L."/>
            <person name="Agrafioti I."/>
            <person name="Arnaud M.B."/>
            <person name="Bates S."/>
            <person name="Brown A.J.P."/>
            <person name="Brunke S."/>
            <person name="Costanzo M.C."/>
            <person name="Fitzpatrick D.A."/>
            <person name="de Groot P.W.J."/>
            <person name="Harris D."/>
            <person name="Hoyer L.L."/>
            <person name="Hube B."/>
            <person name="Klis F.M."/>
            <person name="Kodira C."/>
            <person name="Lennard N."/>
            <person name="Logue M.E."/>
            <person name="Martin R."/>
            <person name="Neiman A.M."/>
            <person name="Nikolaou E."/>
            <person name="Quail M.A."/>
            <person name="Quinn J."/>
            <person name="Santos M.C."/>
            <person name="Schmitzberger F.F."/>
            <person name="Sherlock G."/>
            <person name="Shah P."/>
            <person name="Silverstein K.A.T."/>
            <person name="Skrzypek M.S."/>
            <person name="Soll D."/>
            <person name="Staggs R."/>
            <person name="Stansfield I."/>
            <person name="Stumpf M.P.H."/>
            <person name="Sudbery P.E."/>
            <person name="Srikantha T."/>
            <person name="Zeng Q."/>
            <person name="Berman J."/>
            <person name="Berriman M."/>
            <person name="Heitman J."/>
            <person name="Gow N.A.R."/>
            <person name="Lorenz M.C."/>
            <person name="Birren B.W."/>
            <person name="Kellis M."/>
            <person name="Cuomo C.A."/>
        </authorList>
    </citation>
    <scope>NUCLEOTIDE SEQUENCE [LARGE SCALE GENOMIC DNA]</scope>
    <source>
        <strain>ATCC 11503 / BCRC 21390 / CBS 2605 / JCM 1781 / NBRC 1676 / NRRL YB-4239</strain>
    </source>
</reference>
<comment type="function">
    <text evidence="1">RNA-binding component of the eukaryotic translation initiation factor 3 (eIF-3) complex, which is involved in protein synthesis of a specialized repertoire of mRNAs and, together with other initiation factors, stimulates binding of mRNA and methionyl-tRNAi to the 40S ribosome. The eIF-3 complex specifically targets and initiates translation of a subset of mRNAs involved in cell proliferation.</text>
</comment>
<comment type="subunit">
    <text evidence="1">Component of the eukaryotic translation initiation factor 3 (eIF-3) complex.</text>
</comment>
<comment type="subcellular location">
    <subcellularLocation>
        <location evidence="1">Cytoplasm</location>
    </subcellularLocation>
</comment>
<comment type="similarity">
    <text evidence="1">Belongs to the eIF-3 subunit B family.</text>
</comment>
<evidence type="ECO:0000255" key="1">
    <source>
        <dbReference type="HAMAP-Rule" id="MF_03001"/>
    </source>
</evidence>
<proteinExistence type="inferred from homology"/>
<feature type="chain" id="PRO_0000366876" description="Eukaryotic translation initiation factor 3 subunit B">
    <location>
        <begin position="1"/>
        <end position="709"/>
    </location>
</feature>
<feature type="domain" description="RRM" evidence="1">
    <location>
        <begin position="37"/>
        <end position="124"/>
    </location>
</feature>
<feature type="region of interest" description="Sufficient for interaction with PIC8" evidence="1">
    <location>
        <begin position="1"/>
        <end position="221"/>
    </location>
</feature>
<feature type="region of interest" description="Sufficient for interaction with HCR1 and TIF32" evidence="1">
    <location>
        <begin position="1"/>
        <end position="98"/>
    </location>
</feature>
<keyword id="KW-0963">Cytoplasm</keyword>
<keyword id="KW-0396">Initiation factor</keyword>
<keyword id="KW-0648">Protein biosynthesis</keyword>
<keyword id="KW-1185">Reference proteome</keyword>
<keyword id="KW-0694">RNA-binding</keyword>
<name>EIF3B_LODEL</name>
<organism>
    <name type="scientific">Lodderomyces elongisporus (strain ATCC 11503 / CBS 2605 / JCM 1781 / NBRC 1676 / NRRL YB-4239)</name>
    <name type="common">Yeast</name>
    <name type="synonym">Saccharomyces elongisporus</name>
    <dbReference type="NCBI Taxonomy" id="379508"/>
    <lineage>
        <taxon>Eukaryota</taxon>
        <taxon>Fungi</taxon>
        <taxon>Dikarya</taxon>
        <taxon>Ascomycota</taxon>
        <taxon>Saccharomycotina</taxon>
        <taxon>Pichiomycetes</taxon>
        <taxon>Debaryomycetaceae</taxon>
        <taxon>Candida/Lodderomyces clade</taxon>
        <taxon>Lodderomyces</taxon>
    </lineage>
</organism>
<accession>A5E5Y8</accession>
<protein>
    <recommendedName>
        <fullName evidence="1">Eukaryotic translation initiation factor 3 subunit B</fullName>
        <shortName evidence="1">eIF3b</shortName>
    </recommendedName>
    <alternativeName>
        <fullName evidence="1">Eukaryotic translation initiation factor 3 90 kDa subunit homolog</fullName>
        <shortName evidence="1">eIF3 p90</shortName>
    </alternativeName>
    <alternativeName>
        <fullName evidence="1">Translation initiation factor eIF3, p90 subunit homolog</fullName>
    </alternativeName>
</protein>